<dbReference type="EMBL" id="AF227140">
    <property type="protein sequence ID" value="AAF43913.1"/>
    <property type="molecule type" value="mRNA"/>
</dbReference>
<dbReference type="RefSeq" id="NP_076483.1">
    <property type="nucleotide sequence ID" value="NM_023993.1"/>
</dbReference>
<dbReference type="SMR" id="Q9JKU1"/>
<dbReference type="FunCoup" id="Q9JKU1">
    <property type="interactions" value="86"/>
</dbReference>
<dbReference type="STRING" id="10116.ENSRNOP00000015904"/>
<dbReference type="GlyCosmos" id="Q9JKU1">
    <property type="glycosylation" value="2 sites, No reported glycans"/>
</dbReference>
<dbReference type="GlyGen" id="Q9JKU1">
    <property type="glycosylation" value="2 sites"/>
</dbReference>
<dbReference type="PhosphoSitePlus" id="Q9JKU1"/>
<dbReference type="PaxDb" id="10116-ENSRNOP00000015904"/>
<dbReference type="GeneID" id="78979"/>
<dbReference type="KEGG" id="rno:78979"/>
<dbReference type="UCSC" id="RGD:620733">
    <property type="organism name" value="rat"/>
</dbReference>
<dbReference type="AGR" id="RGD:620733"/>
<dbReference type="CTD" id="57254"/>
<dbReference type="RGD" id="620733">
    <property type="gene designation" value="Tas2r119"/>
</dbReference>
<dbReference type="eggNOG" id="ENOG502S2SI">
    <property type="taxonomic scope" value="Eukaryota"/>
</dbReference>
<dbReference type="InParanoid" id="Q9JKU1"/>
<dbReference type="OrthoDB" id="8876749at2759"/>
<dbReference type="PhylomeDB" id="Q9JKU1"/>
<dbReference type="Reactome" id="R-RNO-418594">
    <property type="pathway name" value="G alpha (i) signalling events"/>
</dbReference>
<dbReference type="Reactome" id="R-RNO-420499">
    <property type="pathway name" value="Class C/3 (Metabotropic glutamate/pheromone receptors)"/>
</dbReference>
<dbReference type="Reactome" id="R-RNO-9717207">
    <property type="pathway name" value="Sensory perception of sweet, bitter, and umami (glutamate) taste"/>
</dbReference>
<dbReference type="PRO" id="PR:Q9JKU1"/>
<dbReference type="Proteomes" id="UP000002494">
    <property type="component" value="Unplaced"/>
</dbReference>
<dbReference type="GO" id="GO:0016020">
    <property type="term" value="C:membrane"/>
    <property type="evidence" value="ECO:0000318"/>
    <property type="project" value="GO_Central"/>
</dbReference>
<dbReference type="GO" id="GO:0033038">
    <property type="term" value="F:bitter taste receptor activity"/>
    <property type="evidence" value="ECO:0000266"/>
    <property type="project" value="RGD"/>
</dbReference>
<dbReference type="GO" id="GO:0004930">
    <property type="term" value="F:G protein-coupled receptor activity"/>
    <property type="evidence" value="ECO:0007669"/>
    <property type="project" value="UniProtKB-KW"/>
</dbReference>
<dbReference type="GO" id="GO:0008527">
    <property type="term" value="F:taste receptor activity"/>
    <property type="evidence" value="ECO:0000304"/>
    <property type="project" value="UniProtKB"/>
</dbReference>
<dbReference type="GO" id="GO:0001580">
    <property type="term" value="P:detection of chemical stimulus involved in sensory perception of bitter taste"/>
    <property type="evidence" value="ECO:0000266"/>
    <property type="project" value="RGD"/>
</dbReference>
<dbReference type="CDD" id="cd15016">
    <property type="entry name" value="7tm_TAS2R1"/>
    <property type="match status" value="1"/>
</dbReference>
<dbReference type="FunFam" id="1.20.1070.10:FF:000055">
    <property type="entry name" value="Taste receptor type 2"/>
    <property type="match status" value="1"/>
</dbReference>
<dbReference type="InterPro" id="IPR007960">
    <property type="entry name" value="TAS2R"/>
</dbReference>
<dbReference type="PANTHER" id="PTHR11394">
    <property type="entry name" value="TASTE RECEPTOR TYPE 2"/>
    <property type="match status" value="1"/>
</dbReference>
<dbReference type="PANTHER" id="PTHR11394:SF149">
    <property type="entry name" value="TASTE RECEPTOR TYPE 2 MEMBER 1"/>
    <property type="match status" value="1"/>
</dbReference>
<dbReference type="Pfam" id="PF05296">
    <property type="entry name" value="TAS2R"/>
    <property type="match status" value="1"/>
</dbReference>
<dbReference type="SUPFAM" id="SSF81321">
    <property type="entry name" value="Family A G protein-coupled receptor-like"/>
    <property type="match status" value="1"/>
</dbReference>
<proteinExistence type="evidence at protein level"/>
<evidence type="ECO:0000255" key="1"/>
<evidence type="ECO:0000256" key="2">
    <source>
        <dbReference type="SAM" id="MobiDB-lite"/>
    </source>
</evidence>
<evidence type="ECO:0000269" key="3">
    <source>
    </source>
</evidence>
<evidence type="ECO:0000305" key="4"/>
<protein>
    <recommendedName>
        <fullName>Taste receptor type 2 member 119</fullName>
        <shortName>T2R119</shortName>
    </recommendedName>
    <alternativeName>
        <fullName>Taste receptor type 2 member 1</fullName>
        <shortName>T2R1</shortName>
    </alternativeName>
    <alternativeName>
        <fullName>Taste receptor type 2 member 19</fullName>
        <shortName>T2R19</shortName>
    </alternativeName>
</protein>
<accession>Q9JKU1</accession>
<comment type="function">
    <text>Gustducin-coupled receptor implicated in the perception of bitter compounds in the oral cavity and the gastrointestinal tract. Signals through PLCB2 and the calcium-regulated cation channel TRPM5.</text>
</comment>
<comment type="subcellular location">
    <subcellularLocation>
        <location>Membrane</location>
        <topology>Multi-pass membrane protein</topology>
    </subcellularLocation>
</comment>
<comment type="tissue specificity">
    <text evidence="3">Expressed in subsets of taste receptor cells of the tongue and palate epithelium and exclusively in gustducin-positive cells. Expressed in the duodenum, antrum and fundus (part of the stomach).</text>
</comment>
<comment type="miscellaneous">
    <text>Several bitter taste receptors are expressed in a single taste receptor cell.</text>
</comment>
<comment type="similarity">
    <text evidence="4">Belongs to the G-protein coupled receptor T2R family.</text>
</comment>
<keyword id="KW-0297">G-protein coupled receptor</keyword>
<keyword id="KW-0325">Glycoprotein</keyword>
<keyword id="KW-0472">Membrane</keyword>
<keyword id="KW-0675">Receptor</keyword>
<keyword id="KW-1185">Reference proteome</keyword>
<keyword id="KW-0716">Sensory transduction</keyword>
<keyword id="KW-0919">Taste</keyword>
<keyword id="KW-0807">Transducer</keyword>
<keyword id="KW-0812">Transmembrane</keyword>
<keyword id="KW-1133">Transmembrane helix</keyword>
<gene>
    <name type="primary">Tas2r119</name>
    <name type="synonym">Tas2r1</name>
    <name type="synonym">Tas2r19</name>
</gene>
<feature type="chain" id="PRO_0000082193" description="Taste receptor type 2 member 119">
    <location>
        <begin position="1"/>
        <end position="335"/>
    </location>
</feature>
<feature type="topological domain" description="Extracellular" evidence="1">
    <location>
        <begin position="1"/>
        <end position="7"/>
    </location>
</feature>
<feature type="transmembrane region" description="Helical; Name=1" evidence="1">
    <location>
        <begin position="8"/>
        <end position="28"/>
    </location>
</feature>
<feature type="topological domain" description="Cytoplasmic" evidence="1">
    <location>
        <begin position="29"/>
        <end position="43"/>
    </location>
</feature>
<feature type="transmembrane region" description="Helical; Name=2" evidence="1">
    <location>
        <begin position="44"/>
        <end position="64"/>
    </location>
</feature>
<feature type="topological domain" description="Extracellular" evidence="1">
    <location>
        <begin position="65"/>
        <end position="81"/>
    </location>
</feature>
<feature type="transmembrane region" description="Helical; Name=3" evidence="1">
    <location>
        <begin position="82"/>
        <end position="102"/>
    </location>
</feature>
<feature type="topological domain" description="Cytoplasmic" evidence="1">
    <location>
        <begin position="103"/>
        <end position="124"/>
    </location>
</feature>
<feature type="transmembrane region" description="Helical; Name=4" evidence="1">
    <location>
        <begin position="125"/>
        <end position="145"/>
    </location>
</feature>
<feature type="topological domain" description="Extracellular" evidence="1">
    <location>
        <begin position="146"/>
        <end position="176"/>
    </location>
</feature>
<feature type="transmembrane region" description="Helical; Name=5" evidence="1">
    <location>
        <begin position="177"/>
        <end position="197"/>
    </location>
</feature>
<feature type="topological domain" description="Cytoplasmic" evidence="1">
    <location>
        <begin position="198"/>
        <end position="224"/>
    </location>
</feature>
<feature type="transmembrane region" description="Helical; Name=6" evidence="1">
    <location>
        <begin position="225"/>
        <end position="245"/>
    </location>
</feature>
<feature type="topological domain" description="Extracellular" evidence="1">
    <location>
        <begin position="246"/>
        <end position="256"/>
    </location>
</feature>
<feature type="transmembrane region" description="Helical; Name=7" evidence="1">
    <location>
        <begin position="257"/>
        <end position="277"/>
    </location>
</feature>
<feature type="topological domain" description="Cytoplasmic" evidence="1">
    <location>
        <begin position="278"/>
        <end position="335"/>
    </location>
</feature>
<feature type="region of interest" description="Disordered" evidence="2">
    <location>
        <begin position="308"/>
        <end position="327"/>
    </location>
</feature>
<feature type="glycosylation site" description="N-linked (GlcNAc...) asparagine" evidence="1">
    <location>
        <position position="81"/>
    </location>
</feature>
<feature type="glycosylation site" description="N-linked (GlcNAc...) asparagine" evidence="1">
    <location>
        <position position="163"/>
    </location>
</feature>
<reference key="1">
    <citation type="journal article" date="2000" name="Cell">
        <title>A novel family of mammalian taste receptors.</title>
        <authorList>
            <person name="Adler E."/>
            <person name="Hoon M.A."/>
            <person name="Mueller K.L."/>
            <person name="Chandrashekar J."/>
            <person name="Ryba N.J.P."/>
            <person name="Zuker C.S."/>
        </authorList>
    </citation>
    <scope>NUCLEOTIDE SEQUENCE [MRNA]</scope>
</reference>
<reference key="2">
    <citation type="journal article" date="2000" name="Cell">
        <title>T2Rs function as bitter taste receptors.</title>
        <authorList>
            <person name="Chandrashekar J."/>
            <person name="Mueller K.L."/>
            <person name="Hoon M.A."/>
            <person name="Adler E."/>
            <person name="Feng L."/>
            <person name="Guo W."/>
            <person name="Zuker C.S."/>
            <person name="Ryba N.J.P."/>
        </authorList>
    </citation>
    <scope>CHARACTERIZATION</scope>
</reference>
<reference key="3">
    <citation type="journal article" date="2002" name="Proc. Natl. Acad. Sci. U.S.A.">
        <title>Expression of bitter taste receptors of the T2R family in the gastrointestinal tract and enteroendocrine STC-1 cells.</title>
        <authorList>
            <person name="Wu S.V."/>
            <person name="Rozengurt N."/>
            <person name="Yang M."/>
            <person name="Young S.H."/>
            <person name="Sinnett-Smith J."/>
            <person name="Rozengurt E."/>
        </authorList>
    </citation>
    <scope>TISSUE SPECIFICITY</scope>
</reference>
<reference key="4">
    <citation type="journal article" date="2002" name="Curr. Opin. Neurobiol.">
        <title>Receptors for bitter and sweet taste.</title>
        <authorList>
            <person name="Montmayeur J.-P."/>
            <person name="Matsunami H."/>
        </authorList>
    </citation>
    <scope>REVIEW</scope>
</reference>
<reference key="5">
    <citation type="journal article" date="2002" name="J. Biol. Chem.">
        <title>Molecular mechanisms of bitter and sweet taste transduction.</title>
        <authorList>
            <person name="Margolskee R.F."/>
        </authorList>
    </citation>
    <scope>REVIEW</scope>
</reference>
<reference key="6">
    <citation type="journal article" date="2003" name="Cell">
        <title>Coding of sweet, bitter, and umami tastes: different receptor cells sharing similar signaling pathways.</title>
        <authorList>
            <person name="Zhang Y."/>
            <person name="Hoon M.A."/>
            <person name="Chandrashekar J."/>
            <person name="Mueller K.L."/>
            <person name="Cook B."/>
            <person name="Wu D."/>
            <person name="Zuker C.S."/>
            <person name="Ryba N.J."/>
        </authorList>
    </citation>
    <scope>REVIEW</scope>
</reference>
<organism>
    <name type="scientific">Rattus norvegicus</name>
    <name type="common">Rat</name>
    <dbReference type="NCBI Taxonomy" id="10116"/>
    <lineage>
        <taxon>Eukaryota</taxon>
        <taxon>Metazoa</taxon>
        <taxon>Chordata</taxon>
        <taxon>Craniata</taxon>
        <taxon>Vertebrata</taxon>
        <taxon>Euteleostomi</taxon>
        <taxon>Mammalia</taxon>
        <taxon>Eutheria</taxon>
        <taxon>Euarchontoglires</taxon>
        <taxon>Glires</taxon>
        <taxon>Rodentia</taxon>
        <taxon>Myomorpha</taxon>
        <taxon>Muroidea</taxon>
        <taxon>Muridae</taxon>
        <taxon>Murinae</taxon>
        <taxon>Rattus</taxon>
    </lineage>
</organism>
<sequence>MMEGHILFFFLVVMVQFVTGVLANGLIVVVHAIDLIMWKKMAPLDLLLFCLATSRIILQLCILFAQLCLFSLVRHTLFEDNITFVFIINELSLWFATWLGVFYCAKIATIPHPLFLWLKMRISRLVPWLILGSVLYVIITTFIHSRETSAILKPIFISLFPKNATQVGTGHATLLSVLVLGLTLPLFIFTVAVLLLIYSLWNYSRQMRTMVGTREYSGHAHISAMLSILSFLILYLSHYMVAVLISTQVLYLGSRTFVFCLLVIGMYPSIHSIVLILGNPKLKRNAKMFIVHCKCCHCTRAWVTSRSPRLSDLPVPPTHPSANKTSCSEACIMPS</sequence>
<name>TR119_RAT</name>